<dbReference type="EC" id="2.7.8.26" evidence="1"/>
<dbReference type="EMBL" id="AE016853">
    <property type="protein sequence ID" value="AAO55237.1"/>
    <property type="molecule type" value="Genomic_DNA"/>
</dbReference>
<dbReference type="RefSeq" id="NP_791542.1">
    <property type="nucleotide sequence ID" value="NC_004578.1"/>
</dbReference>
<dbReference type="RefSeq" id="WP_011103682.1">
    <property type="nucleotide sequence ID" value="NC_004578.1"/>
</dbReference>
<dbReference type="STRING" id="223283.PSPTO_1717"/>
<dbReference type="GeneID" id="1183354"/>
<dbReference type="KEGG" id="pst:PSPTO_1717"/>
<dbReference type="PATRIC" id="fig|223283.9.peg.1745"/>
<dbReference type="eggNOG" id="COG0368">
    <property type="taxonomic scope" value="Bacteria"/>
</dbReference>
<dbReference type="HOGENOM" id="CLU_057426_3_1_6"/>
<dbReference type="OrthoDB" id="9794626at2"/>
<dbReference type="PhylomeDB" id="Q885W4"/>
<dbReference type="UniPathway" id="UPA00148">
    <property type="reaction ID" value="UER00238"/>
</dbReference>
<dbReference type="Proteomes" id="UP000002515">
    <property type="component" value="Chromosome"/>
</dbReference>
<dbReference type="GO" id="GO:0005886">
    <property type="term" value="C:plasma membrane"/>
    <property type="evidence" value="ECO:0007669"/>
    <property type="project" value="UniProtKB-SubCell"/>
</dbReference>
<dbReference type="GO" id="GO:0051073">
    <property type="term" value="F:adenosylcobinamide-GDP ribazoletransferase activity"/>
    <property type="evidence" value="ECO:0007669"/>
    <property type="project" value="UniProtKB-UniRule"/>
</dbReference>
<dbReference type="GO" id="GO:0008818">
    <property type="term" value="F:cobalamin 5'-phosphate synthase activity"/>
    <property type="evidence" value="ECO:0007669"/>
    <property type="project" value="UniProtKB-UniRule"/>
</dbReference>
<dbReference type="GO" id="GO:0009236">
    <property type="term" value="P:cobalamin biosynthetic process"/>
    <property type="evidence" value="ECO:0007669"/>
    <property type="project" value="UniProtKB-UniRule"/>
</dbReference>
<dbReference type="HAMAP" id="MF_00719">
    <property type="entry name" value="CobS"/>
    <property type="match status" value="1"/>
</dbReference>
<dbReference type="InterPro" id="IPR003805">
    <property type="entry name" value="CobS"/>
</dbReference>
<dbReference type="NCBIfam" id="TIGR00317">
    <property type="entry name" value="cobS"/>
    <property type="match status" value="1"/>
</dbReference>
<dbReference type="NCBIfam" id="NF001278">
    <property type="entry name" value="PRK00235.1-5"/>
    <property type="match status" value="1"/>
</dbReference>
<dbReference type="PANTHER" id="PTHR34148">
    <property type="entry name" value="ADENOSYLCOBINAMIDE-GDP RIBAZOLETRANSFERASE"/>
    <property type="match status" value="1"/>
</dbReference>
<dbReference type="PANTHER" id="PTHR34148:SF1">
    <property type="entry name" value="ADENOSYLCOBINAMIDE-GDP RIBAZOLETRANSFERASE"/>
    <property type="match status" value="1"/>
</dbReference>
<dbReference type="Pfam" id="PF02654">
    <property type="entry name" value="CobS"/>
    <property type="match status" value="1"/>
</dbReference>
<proteinExistence type="inferred from homology"/>
<feature type="chain" id="PRO_0000146890" description="Adenosylcobinamide-GDP ribazoletransferase">
    <location>
        <begin position="1"/>
        <end position="243"/>
    </location>
</feature>
<feature type="transmembrane region" description="Helical" evidence="1">
    <location>
        <begin position="31"/>
        <end position="51"/>
    </location>
</feature>
<feature type="transmembrane region" description="Helical" evidence="1">
    <location>
        <begin position="55"/>
        <end position="75"/>
    </location>
</feature>
<feature type="transmembrane region" description="Helical" evidence="1">
    <location>
        <begin position="109"/>
        <end position="129"/>
    </location>
</feature>
<feature type="transmembrane region" description="Helical" evidence="1">
    <location>
        <begin position="135"/>
        <end position="155"/>
    </location>
</feature>
<feature type="transmembrane region" description="Helical" evidence="1">
    <location>
        <begin position="188"/>
        <end position="208"/>
    </location>
</feature>
<keyword id="KW-0997">Cell inner membrane</keyword>
<keyword id="KW-1003">Cell membrane</keyword>
<keyword id="KW-0169">Cobalamin biosynthesis</keyword>
<keyword id="KW-0460">Magnesium</keyword>
<keyword id="KW-0472">Membrane</keyword>
<keyword id="KW-1185">Reference proteome</keyword>
<keyword id="KW-0808">Transferase</keyword>
<keyword id="KW-0812">Transmembrane</keyword>
<keyword id="KW-1133">Transmembrane helix</keyword>
<gene>
    <name evidence="1" type="primary">cobS</name>
    <name type="ordered locus">PSPTO_1717</name>
</gene>
<protein>
    <recommendedName>
        <fullName evidence="1">Adenosylcobinamide-GDP ribazoletransferase</fullName>
        <ecNumber evidence="1">2.7.8.26</ecNumber>
    </recommendedName>
    <alternativeName>
        <fullName evidence="1">Cobalamin synthase</fullName>
    </alternativeName>
    <alternativeName>
        <fullName evidence="1">Cobalamin-5'-phosphate synthase</fullName>
    </alternativeName>
</protein>
<sequence>MLPFWIALQFLGSLPIRLPGMPRPAELGRSLLFYPLVGVVFGTLLLGFNALLSGAPLLLHAALLLSAWVLLSGGLHLDGLADSADAWLGGFGDRERTLNIMKDPRSGPIAVVTLVVVLLLKFAAIVALIESHNSIGLLLAPLIGRSAMLALFLGTPYVRSGGLGQALADHLPRSLGRKVLLVSTVACVVLAGWSGIAALLVCAVCFYWLRHMMMRRLGGSTGDTAGALLELLELAVVLTLALL</sequence>
<comment type="function">
    <text evidence="1">Joins adenosylcobinamide-GDP and alpha-ribazole to generate adenosylcobalamin (Ado-cobalamin). Also synthesizes adenosylcobalamin 5'-phosphate from adenosylcobinamide-GDP and alpha-ribazole 5'-phosphate.</text>
</comment>
<comment type="catalytic activity">
    <reaction evidence="1">
        <text>alpha-ribazole + adenosylcob(III)inamide-GDP = adenosylcob(III)alamin + GMP + H(+)</text>
        <dbReference type="Rhea" id="RHEA:16049"/>
        <dbReference type="ChEBI" id="CHEBI:10329"/>
        <dbReference type="ChEBI" id="CHEBI:15378"/>
        <dbReference type="ChEBI" id="CHEBI:18408"/>
        <dbReference type="ChEBI" id="CHEBI:58115"/>
        <dbReference type="ChEBI" id="CHEBI:60487"/>
        <dbReference type="EC" id="2.7.8.26"/>
    </reaction>
</comment>
<comment type="catalytic activity">
    <reaction evidence="1">
        <text>alpha-ribazole 5'-phosphate + adenosylcob(III)inamide-GDP = adenosylcob(III)alamin 5'-phosphate + GMP + H(+)</text>
        <dbReference type="Rhea" id="RHEA:23560"/>
        <dbReference type="ChEBI" id="CHEBI:15378"/>
        <dbReference type="ChEBI" id="CHEBI:57918"/>
        <dbReference type="ChEBI" id="CHEBI:58115"/>
        <dbReference type="ChEBI" id="CHEBI:60487"/>
        <dbReference type="ChEBI" id="CHEBI:60493"/>
        <dbReference type="EC" id="2.7.8.26"/>
    </reaction>
</comment>
<comment type="cofactor">
    <cofactor evidence="1">
        <name>Mg(2+)</name>
        <dbReference type="ChEBI" id="CHEBI:18420"/>
    </cofactor>
</comment>
<comment type="pathway">
    <text evidence="1">Cofactor biosynthesis; adenosylcobalamin biosynthesis; adenosylcobalamin from cob(II)yrinate a,c-diamide: step 7/7.</text>
</comment>
<comment type="subcellular location">
    <subcellularLocation>
        <location evidence="1">Cell inner membrane</location>
        <topology evidence="1">Multi-pass membrane protein</topology>
    </subcellularLocation>
</comment>
<comment type="similarity">
    <text evidence="1">Belongs to the CobS family.</text>
</comment>
<evidence type="ECO:0000255" key="1">
    <source>
        <dbReference type="HAMAP-Rule" id="MF_00719"/>
    </source>
</evidence>
<reference key="1">
    <citation type="journal article" date="2003" name="Proc. Natl. Acad. Sci. U.S.A.">
        <title>The complete genome sequence of the Arabidopsis and tomato pathogen Pseudomonas syringae pv. tomato DC3000.</title>
        <authorList>
            <person name="Buell C.R."/>
            <person name="Joardar V."/>
            <person name="Lindeberg M."/>
            <person name="Selengut J."/>
            <person name="Paulsen I.T."/>
            <person name="Gwinn M.L."/>
            <person name="Dodson R.J."/>
            <person name="DeBoy R.T."/>
            <person name="Durkin A.S."/>
            <person name="Kolonay J.F."/>
            <person name="Madupu R."/>
            <person name="Daugherty S.C."/>
            <person name="Brinkac L.M."/>
            <person name="Beanan M.J."/>
            <person name="Haft D.H."/>
            <person name="Nelson W.C."/>
            <person name="Davidsen T.M."/>
            <person name="Zafar N."/>
            <person name="Zhou L."/>
            <person name="Liu J."/>
            <person name="Yuan Q."/>
            <person name="Khouri H.M."/>
            <person name="Fedorova N.B."/>
            <person name="Tran B."/>
            <person name="Russell D."/>
            <person name="Berry K.J."/>
            <person name="Utterback T.R."/>
            <person name="Van Aken S.E."/>
            <person name="Feldblyum T.V."/>
            <person name="D'Ascenzo M."/>
            <person name="Deng W.-L."/>
            <person name="Ramos A.R."/>
            <person name="Alfano J.R."/>
            <person name="Cartinhour S."/>
            <person name="Chatterjee A.K."/>
            <person name="Delaney T.P."/>
            <person name="Lazarowitz S.G."/>
            <person name="Martin G.B."/>
            <person name="Schneider D.J."/>
            <person name="Tang X."/>
            <person name="Bender C.L."/>
            <person name="White O."/>
            <person name="Fraser C.M."/>
            <person name="Collmer A."/>
        </authorList>
    </citation>
    <scope>NUCLEOTIDE SEQUENCE [LARGE SCALE GENOMIC DNA]</scope>
    <source>
        <strain>ATCC BAA-871 / DC3000</strain>
    </source>
</reference>
<organism>
    <name type="scientific">Pseudomonas syringae pv. tomato (strain ATCC BAA-871 / DC3000)</name>
    <dbReference type="NCBI Taxonomy" id="223283"/>
    <lineage>
        <taxon>Bacteria</taxon>
        <taxon>Pseudomonadati</taxon>
        <taxon>Pseudomonadota</taxon>
        <taxon>Gammaproteobacteria</taxon>
        <taxon>Pseudomonadales</taxon>
        <taxon>Pseudomonadaceae</taxon>
        <taxon>Pseudomonas</taxon>
    </lineage>
</organism>
<accession>Q885W4</accession>
<name>COBS_PSESM</name>